<feature type="chain" id="PRO_0000374324" description="tRNA-2-methylthio-N(6)-dimethylallyladenosine synthase">
    <location>
        <begin position="1"/>
        <end position="475"/>
    </location>
</feature>
<feature type="domain" description="MTTase N-terminal" evidence="1">
    <location>
        <begin position="24"/>
        <end position="145"/>
    </location>
</feature>
<feature type="domain" description="Radical SAM core" evidence="2">
    <location>
        <begin position="172"/>
        <end position="404"/>
    </location>
</feature>
<feature type="domain" description="TRAM" evidence="1">
    <location>
        <begin position="407"/>
        <end position="469"/>
    </location>
</feature>
<feature type="region of interest" description="Disordered" evidence="3">
    <location>
        <begin position="1"/>
        <end position="21"/>
    </location>
</feature>
<feature type="binding site" evidence="1">
    <location>
        <position position="33"/>
    </location>
    <ligand>
        <name>[4Fe-4S] cluster</name>
        <dbReference type="ChEBI" id="CHEBI:49883"/>
        <label>1</label>
    </ligand>
</feature>
<feature type="binding site" evidence="1">
    <location>
        <position position="69"/>
    </location>
    <ligand>
        <name>[4Fe-4S] cluster</name>
        <dbReference type="ChEBI" id="CHEBI:49883"/>
        <label>1</label>
    </ligand>
</feature>
<feature type="binding site" evidence="1">
    <location>
        <position position="108"/>
    </location>
    <ligand>
        <name>[4Fe-4S] cluster</name>
        <dbReference type="ChEBI" id="CHEBI:49883"/>
        <label>1</label>
    </ligand>
</feature>
<feature type="binding site" evidence="1">
    <location>
        <position position="186"/>
    </location>
    <ligand>
        <name>[4Fe-4S] cluster</name>
        <dbReference type="ChEBI" id="CHEBI:49883"/>
        <label>2</label>
        <note>4Fe-4S-S-AdoMet</note>
    </ligand>
</feature>
<feature type="binding site" evidence="1">
    <location>
        <position position="190"/>
    </location>
    <ligand>
        <name>[4Fe-4S] cluster</name>
        <dbReference type="ChEBI" id="CHEBI:49883"/>
        <label>2</label>
        <note>4Fe-4S-S-AdoMet</note>
    </ligand>
</feature>
<feature type="binding site" evidence="1">
    <location>
        <position position="193"/>
    </location>
    <ligand>
        <name>[4Fe-4S] cluster</name>
        <dbReference type="ChEBI" id="CHEBI:49883"/>
        <label>2</label>
        <note>4Fe-4S-S-AdoMet</note>
    </ligand>
</feature>
<proteinExistence type="inferred from homology"/>
<comment type="function">
    <text evidence="1">Catalyzes the methylthiolation of N6-(dimethylallyl)adenosine (i(6)A), leading to the formation of 2-methylthio-N6-(dimethylallyl)adenosine (ms(2)i(6)A) at position 37 in tRNAs that read codons beginning with uridine.</text>
</comment>
<comment type="catalytic activity">
    <reaction evidence="1">
        <text>N(6)-dimethylallyladenosine(37) in tRNA + (sulfur carrier)-SH + AH2 + 2 S-adenosyl-L-methionine = 2-methylsulfanyl-N(6)-dimethylallyladenosine(37) in tRNA + (sulfur carrier)-H + 5'-deoxyadenosine + L-methionine + A + S-adenosyl-L-homocysteine + 2 H(+)</text>
        <dbReference type="Rhea" id="RHEA:37067"/>
        <dbReference type="Rhea" id="RHEA-COMP:10375"/>
        <dbReference type="Rhea" id="RHEA-COMP:10376"/>
        <dbReference type="Rhea" id="RHEA-COMP:14737"/>
        <dbReference type="Rhea" id="RHEA-COMP:14739"/>
        <dbReference type="ChEBI" id="CHEBI:13193"/>
        <dbReference type="ChEBI" id="CHEBI:15378"/>
        <dbReference type="ChEBI" id="CHEBI:17319"/>
        <dbReference type="ChEBI" id="CHEBI:17499"/>
        <dbReference type="ChEBI" id="CHEBI:29917"/>
        <dbReference type="ChEBI" id="CHEBI:57844"/>
        <dbReference type="ChEBI" id="CHEBI:57856"/>
        <dbReference type="ChEBI" id="CHEBI:59789"/>
        <dbReference type="ChEBI" id="CHEBI:64428"/>
        <dbReference type="ChEBI" id="CHEBI:74415"/>
        <dbReference type="ChEBI" id="CHEBI:74417"/>
        <dbReference type="EC" id="2.8.4.3"/>
    </reaction>
</comment>
<comment type="cofactor">
    <cofactor evidence="1">
        <name>[4Fe-4S] cluster</name>
        <dbReference type="ChEBI" id="CHEBI:49883"/>
    </cofactor>
    <text evidence="1">Binds 2 [4Fe-4S] clusters. One cluster is coordinated with 3 cysteines and an exchangeable S-adenosyl-L-methionine.</text>
</comment>
<comment type="subunit">
    <text evidence="1">Monomer.</text>
</comment>
<comment type="subcellular location">
    <subcellularLocation>
        <location evidence="1">Cytoplasm</location>
    </subcellularLocation>
</comment>
<comment type="similarity">
    <text evidence="1">Belongs to the methylthiotransferase family. MiaB subfamily.</text>
</comment>
<comment type="sequence caution" evidence="4">
    <conflict type="erroneous initiation">
        <sequence resource="EMBL-CDS" id="AAW61745"/>
    </conflict>
</comment>
<reference key="1">
    <citation type="journal article" date="2005" name="Nat. Biotechnol.">
        <title>Complete genome sequence of the acetic acid bacterium Gluconobacter oxydans.</title>
        <authorList>
            <person name="Prust C."/>
            <person name="Hoffmeister M."/>
            <person name="Liesegang H."/>
            <person name="Wiezer A."/>
            <person name="Fricke W.F."/>
            <person name="Ehrenreich A."/>
            <person name="Gottschalk G."/>
            <person name="Deppenmeier U."/>
        </authorList>
    </citation>
    <scope>NUCLEOTIDE SEQUENCE [LARGE SCALE GENOMIC DNA]</scope>
    <source>
        <strain>621H</strain>
    </source>
</reference>
<protein>
    <recommendedName>
        <fullName evidence="1">tRNA-2-methylthio-N(6)-dimethylallyladenosine synthase</fullName>
        <ecNumber evidence="1">2.8.4.3</ecNumber>
    </recommendedName>
    <alternativeName>
        <fullName evidence="1">(Dimethylallyl)adenosine tRNA methylthiotransferase MiaB</fullName>
    </alternativeName>
    <alternativeName>
        <fullName evidence="1">tRNA-i(6)A37 methylthiotransferase</fullName>
    </alternativeName>
</protein>
<sequence length="475" mass="51755">MTTAPTSPALPASSDTAPTGPAPRGLHVITWGCQMNVYDSARMADVLRPLGYGPVERPEDADMVILNTCHIRERATEKVFSELGRLRKIRDERMSNGADRTIIAVAGCVAQAEGEVILTRAPYVDLVLGPQTYHKLPEMVARAARAGGAVIETDFPVEQKFDFLPTDAAPQTQGNLTAFLTIQEGCDKFCSFCVVPYTRGAETSRPVASVLAEARRMAESGVREITLLGQNVNAYHGDDGKGGSETLAGLVEQLAQIPGLGRIRYMTSHPRDVDQSLIDAHRDNPALMPFLHLPVQSGSDRILKAMNRGHTADEYRESVRKLREARPDLALSSDFIVGHPGETEEDFEATMQLVRDIGFAMAYSFKYSPRPGTPAAGQPMQVPEDVKDRRLAELQALLREQQDAFNADMVGTVQEILVTNRGRKPGQIAGRSPYLQPVHFDGPDHLIGSTVKVAITTRRTNSLGGTLIRETASAC</sequence>
<keyword id="KW-0004">4Fe-4S</keyword>
<keyword id="KW-0963">Cytoplasm</keyword>
<keyword id="KW-0408">Iron</keyword>
<keyword id="KW-0411">Iron-sulfur</keyword>
<keyword id="KW-0479">Metal-binding</keyword>
<keyword id="KW-1185">Reference proteome</keyword>
<keyword id="KW-0949">S-adenosyl-L-methionine</keyword>
<keyword id="KW-0808">Transferase</keyword>
<keyword id="KW-0819">tRNA processing</keyword>
<accession>Q5FPF1</accession>
<dbReference type="EC" id="2.8.4.3" evidence="1"/>
<dbReference type="EMBL" id="CP000009">
    <property type="protein sequence ID" value="AAW61745.1"/>
    <property type="status" value="ALT_INIT"/>
    <property type="molecule type" value="Genomic_DNA"/>
</dbReference>
<dbReference type="SMR" id="Q5FPF1"/>
<dbReference type="STRING" id="290633.GOX2009"/>
<dbReference type="KEGG" id="gox:GOX2009"/>
<dbReference type="eggNOG" id="COG0621">
    <property type="taxonomic scope" value="Bacteria"/>
</dbReference>
<dbReference type="HOGENOM" id="CLU_018697_2_0_5"/>
<dbReference type="Proteomes" id="UP000006375">
    <property type="component" value="Chromosome"/>
</dbReference>
<dbReference type="GO" id="GO:0005829">
    <property type="term" value="C:cytosol"/>
    <property type="evidence" value="ECO:0007669"/>
    <property type="project" value="TreeGrafter"/>
</dbReference>
<dbReference type="GO" id="GO:0051539">
    <property type="term" value="F:4 iron, 4 sulfur cluster binding"/>
    <property type="evidence" value="ECO:0007669"/>
    <property type="project" value="UniProtKB-UniRule"/>
</dbReference>
<dbReference type="GO" id="GO:0046872">
    <property type="term" value="F:metal ion binding"/>
    <property type="evidence" value="ECO:0007669"/>
    <property type="project" value="UniProtKB-KW"/>
</dbReference>
<dbReference type="GO" id="GO:0035597">
    <property type="term" value="F:N6-isopentenyladenosine methylthiotransferase activity"/>
    <property type="evidence" value="ECO:0007669"/>
    <property type="project" value="TreeGrafter"/>
</dbReference>
<dbReference type="CDD" id="cd01335">
    <property type="entry name" value="Radical_SAM"/>
    <property type="match status" value="1"/>
</dbReference>
<dbReference type="FunFam" id="3.40.50.12160:FF:000003">
    <property type="entry name" value="CDK5 regulatory subunit-associated protein 1"/>
    <property type="match status" value="1"/>
</dbReference>
<dbReference type="FunFam" id="3.80.30.20:FF:000001">
    <property type="entry name" value="tRNA-2-methylthio-N(6)-dimethylallyladenosine synthase 2"/>
    <property type="match status" value="1"/>
</dbReference>
<dbReference type="Gene3D" id="3.40.50.12160">
    <property type="entry name" value="Methylthiotransferase, N-terminal domain"/>
    <property type="match status" value="1"/>
</dbReference>
<dbReference type="Gene3D" id="3.80.30.20">
    <property type="entry name" value="tm_1862 like domain"/>
    <property type="match status" value="1"/>
</dbReference>
<dbReference type="HAMAP" id="MF_01864">
    <property type="entry name" value="tRNA_metthiotr_MiaB"/>
    <property type="match status" value="1"/>
</dbReference>
<dbReference type="InterPro" id="IPR006638">
    <property type="entry name" value="Elp3/MiaA/NifB-like_rSAM"/>
</dbReference>
<dbReference type="InterPro" id="IPR005839">
    <property type="entry name" value="Methylthiotransferase"/>
</dbReference>
<dbReference type="InterPro" id="IPR020612">
    <property type="entry name" value="Methylthiotransferase_CS"/>
</dbReference>
<dbReference type="InterPro" id="IPR013848">
    <property type="entry name" value="Methylthiotransferase_N"/>
</dbReference>
<dbReference type="InterPro" id="IPR038135">
    <property type="entry name" value="Methylthiotransferase_N_sf"/>
</dbReference>
<dbReference type="InterPro" id="IPR006463">
    <property type="entry name" value="MiaB_methiolase"/>
</dbReference>
<dbReference type="InterPro" id="IPR007197">
    <property type="entry name" value="rSAM"/>
</dbReference>
<dbReference type="InterPro" id="IPR023404">
    <property type="entry name" value="rSAM_horseshoe"/>
</dbReference>
<dbReference type="InterPro" id="IPR002792">
    <property type="entry name" value="TRAM_dom"/>
</dbReference>
<dbReference type="NCBIfam" id="TIGR01574">
    <property type="entry name" value="miaB-methiolase"/>
    <property type="match status" value="1"/>
</dbReference>
<dbReference type="NCBIfam" id="TIGR00089">
    <property type="entry name" value="MiaB/RimO family radical SAM methylthiotransferase"/>
    <property type="match status" value="1"/>
</dbReference>
<dbReference type="PANTHER" id="PTHR43020">
    <property type="entry name" value="CDK5 REGULATORY SUBUNIT-ASSOCIATED PROTEIN 1"/>
    <property type="match status" value="1"/>
</dbReference>
<dbReference type="PANTHER" id="PTHR43020:SF2">
    <property type="entry name" value="MITOCHONDRIAL TRNA METHYLTHIOTRANSFERASE CDK5RAP1"/>
    <property type="match status" value="1"/>
</dbReference>
<dbReference type="Pfam" id="PF04055">
    <property type="entry name" value="Radical_SAM"/>
    <property type="match status" value="1"/>
</dbReference>
<dbReference type="Pfam" id="PF01938">
    <property type="entry name" value="TRAM"/>
    <property type="match status" value="1"/>
</dbReference>
<dbReference type="Pfam" id="PF00919">
    <property type="entry name" value="UPF0004"/>
    <property type="match status" value="1"/>
</dbReference>
<dbReference type="SFLD" id="SFLDF00273">
    <property type="entry name" value="(dimethylallyl)adenosine_tRNA"/>
    <property type="match status" value="1"/>
</dbReference>
<dbReference type="SFLD" id="SFLDG01082">
    <property type="entry name" value="B12-binding_domain_containing"/>
    <property type="match status" value="1"/>
</dbReference>
<dbReference type="SFLD" id="SFLDS00029">
    <property type="entry name" value="Radical_SAM"/>
    <property type="match status" value="1"/>
</dbReference>
<dbReference type="SMART" id="SM00729">
    <property type="entry name" value="Elp3"/>
    <property type="match status" value="1"/>
</dbReference>
<dbReference type="SUPFAM" id="SSF102114">
    <property type="entry name" value="Radical SAM enzymes"/>
    <property type="match status" value="1"/>
</dbReference>
<dbReference type="PROSITE" id="PS51449">
    <property type="entry name" value="MTTASE_N"/>
    <property type="match status" value="1"/>
</dbReference>
<dbReference type="PROSITE" id="PS01278">
    <property type="entry name" value="MTTASE_RADICAL"/>
    <property type="match status" value="1"/>
</dbReference>
<dbReference type="PROSITE" id="PS51918">
    <property type="entry name" value="RADICAL_SAM"/>
    <property type="match status" value="1"/>
</dbReference>
<dbReference type="PROSITE" id="PS50926">
    <property type="entry name" value="TRAM"/>
    <property type="match status" value="1"/>
</dbReference>
<gene>
    <name evidence="1" type="primary">miaB</name>
    <name type="ordered locus">GOX2009</name>
</gene>
<evidence type="ECO:0000255" key="1">
    <source>
        <dbReference type="HAMAP-Rule" id="MF_01864"/>
    </source>
</evidence>
<evidence type="ECO:0000255" key="2">
    <source>
        <dbReference type="PROSITE-ProRule" id="PRU01266"/>
    </source>
</evidence>
<evidence type="ECO:0000256" key="3">
    <source>
        <dbReference type="SAM" id="MobiDB-lite"/>
    </source>
</evidence>
<evidence type="ECO:0000305" key="4"/>
<name>MIAB_GLUOX</name>
<organism>
    <name type="scientific">Gluconobacter oxydans (strain 621H)</name>
    <name type="common">Gluconobacter suboxydans</name>
    <dbReference type="NCBI Taxonomy" id="290633"/>
    <lineage>
        <taxon>Bacteria</taxon>
        <taxon>Pseudomonadati</taxon>
        <taxon>Pseudomonadota</taxon>
        <taxon>Alphaproteobacteria</taxon>
        <taxon>Acetobacterales</taxon>
        <taxon>Acetobacteraceae</taxon>
        <taxon>Gluconobacter</taxon>
    </lineage>
</organism>